<feature type="signal peptide" evidence="1">
    <location>
        <begin position="1"/>
        <end position="35"/>
    </location>
</feature>
<feature type="chain" id="PRO_0000456629" description="Domesticated amidase effector 2">
    <location>
        <begin position="36"/>
        <end position="142"/>
    </location>
</feature>
<feature type="active site" evidence="8 9">
    <location>
        <position position="43"/>
    </location>
</feature>
<feature type="active site" evidence="8">
    <location>
        <position position="94"/>
    </location>
</feature>
<feature type="mutagenesis site" description="Loss of catalytic activity." evidence="4">
    <original>C</original>
    <variation>A</variation>
    <location>
        <position position="43"/>
    </location>
</feature>
<evidence type="ECO:0000255" key="1"/>
<evidence type="ECO:0000269" key="2">
    <source>
    </source>
</evidence>
<evidence type="ECO:0000269" key="3">
    <source>
    </source>
</evidence>
<evidence type="ECO:0000269" key="4">
    <source>
    </source>
</evidence>
<evidence type="ECO:0000303" key="5">
    <source>
    </source>
</evidence>
<evidence type="ECO:0000303" key="6">
    <source>
    </source>
</evidence>
<evidence type="ECO:0000305" key="7"/>
<evidence type="ECO:0000305" key="8">
    <source>
    </source>
</evidence>
<evidence type="ECO:0000305" key="9">
    <source>
    </source>
</evidence>
<evidence type="ECO:0000312" key="10">
    <source>
        <dbReference type="EMBL" id="EEC07552.1"/>
    </source>
</evidence>
<evidence type="ECO:0000312" key="11">
    <source>
        <dbReference type="Proteomes" id="UP000001555"/>
    </source>
</evidence>
<name>DAE2_IXOSC</name>
<accession>B7PLT0</accession>
<reference evidence="10 11" key="1">
    <citation type="submission" date="2008-03" db="EMBL/GenBank/DDBJ databases">
        <title>Annotation of Ixodes scapularis.</title>
        <authorList>
            <consortium name="Ixodes scapularis Genome Project Consortium"/>
            <person name="Caler E."/>
            <person name="Hannick L.I."/>
            <person name="Bidwell S."/>
            <person name="Joardar V."/>
            <person name="Thiagarajan M."/>
            <person name="Amedeo P."/>
            <person name="Galinsky K.J."/>
            <person name="Schobel S."/>
            <person name="Inman J."/>
            <person name="Hostetler J."/>
            <person name="Miller J."/>
            <person name="Hammond M."/>
            <person name="Megy K."/>
            <person name="Lawson D."/>
            <person name="Kodira C."/>
            <person name="Sutton G."/>
            <person name="Meyer J."/>
            <person name="Hill C.A."/>
            <person name="Birren B."/>
            <person name="Nene V."/>
            <person name="Collins F."/>
            <person name="Alarcon-Chaidez F."/>
            <person name="Wikel S."/>
            <person name="Strausberg R."/>
        </authorList>
    </citation>
    <scope>NUCLEOTIDE SEQUENCE [LARGE SCALE GENOMIC DNA]</scope>
    <source>
        <strain>Wikel</strain>
    </source>
</reference>
<reference key="2">
    <citation type="journal article" date="2015" name="Nature">
        <title>Transferred interbacterial antagonism genes augment eukaryotic innate immune function.</title>
        <authorList>
            <person name="Chou S."/>
            <person name="Daugherty M.D."/>
            <person name="Peterson S.B."/>
            <person name="Biboy J."/>
            <person name="Yang Y."/>
            <person name="Jutras B.L."/>
            <person name="Fritz-Laylin L.K."/>
            <person name="Ferrin M.A."/>
            <person name="Harding B.N."/>
            <person name="Jacobs-Wagner C."/>
            <person name="Yang X.F."/>
            <person name="Vollmer W."/>
            <person name="Malik H.S."/>
            <person name="Mougous J.D."/>
        </authorList>
    </citation>
    <scope>FUNCTION</scope>
    <scope>TISSUE SPECIFICITY</scope>
    <scope>DEVELOPMENTAL STAGE</scope>
    <scope>DISRUPTION PHENOTYPE</scope>
</reference>
<reference key="3">
    <citation type="journal article" date="2016" name="Cell Host Microbe">
        <title>Cross-species interferon signaling boosts microbicidal activity within the tick vector.</title>
        <authorList>
            <person name="Smith A.A."/>
            <person name="Navasa N."/>
            <person name="Yang X."/>
            <person name="Wilder C.N."/>
            <person name="Buyuktanir O."/>
            <person name="Marques A."/>
            <person name="Anguita J."/>
            <person name="Pal U."/>
        </authorList>
    </citation>
    <scope>INDUCTION BY HOST INTERFERON-GAMMA</scope>
</reference>
<reference key="4">
    <citation type="journal article" date="2020" name="Cell">
        <title>Ticks resist skin commensals with immune factor of bacterial origin.</title>
        <authorList>
            <person name="Hayes B.M."/>
            <person name="Radkov A.D."/>
            <person name="Yarza F."/>
            <person name="Flores S."/>
            <person name="Kim J."/>
            <person name="Zhao Z."/>
            <person name="Lexa K.W."/>
            <person name="Marnin L."/>
            <person name="Biboy J."/>
            <person name="Bowcut V."/>
            <person name="Vollmer W."/>
            <person name="Pedra J.H.F."/>
            <person name="Chou S."/>
        </authorList>
    </citation>
    <scope>FUNCTION</scope>
    <scope>SUBCELLULAR LOCATION</scope>
    <scope>TISSUE SPECIFICITY</scope>
    <scope>DEVELOPMENTAL STAGE</scope>
    <scope>INDUCTION BY FEEDING</scope>
    <scope>DISRUPTION PHENOTYPE</scope>
    <scope>MUTAGENESIS OF CYS-43</scope>
    <scope>3D-STRUCTURE MODELING</scope>
</reference>
<organism>
    <name type="scientific">Ixodes scapularis</name>
    <name type="common">Black-legged tick</name>
    <name type="synonym">Deer tick</name>
    <dbReference type="NCBI Taxonomy" id="6945"/>
    <lineage>
        <taxon>Eukaryota</taxon>
        <taxon>Metazoa</taxon>
        <taxon>Ecdysozoa</taxon>
        <taxon>Arthropoda</taxon>
        <taxon>Chelicerata</taxon>
        <taxon>Arachnida</taxon>
        <taxon>Acari</taxon>
        <taxon>Parasitiformes</taxon>
        <taxon>Ixodida</taxon>
        <taxon>Ixodoidea</taxon>
        <taxon>Ixodidae</taxon>
        <taxon>Ixodinae</taxon>
        <taxon>Ixodes</taxon>
    </lineage>
</organism>
<proteinExistence type="evidence at protein level"/>
<gene>
    <name evidence="10" type="ORF">IscW_ISCW006596</name>
    <name evidence="6" type="ORF">XP_002434728</name>
</gene>
<sequence length="142" mass="15688">MKLFLISAALVVLGLAAVADAIGCSDPSPFQGRWVIGVDKKECVALVKEKCGNLRDYTTGRWVRGQHVKSNCGSIPKFTAIATFLKPGNKYLGHAAIFESCASDGIWVYDQWNAKPVERRKIRYGNTGKPNYNGDNFYTIEL</sequence>
<keyword id="KW-0044">Antibiotic</keyword>
<keyword id="KW-0929">Antimicrobial</keyword>
<keyword id="KW-0378">Hydrolase</keyword>
<keyword id="KW-0391">Immunity</keyword>
<keyword id="KW-0399">Innate immunity</keyword>
<keyword id="KW-1185">Reference proteome</keyword>
<keyword id="KW-0964">Secreted</keyword>
<keyword id="KW-0732">Signal</keyword>
<comment type="function">
    <text evidence="2 4">Tick gut and saliva antibacterial peptide that directly antagonizes host skin commensals which enter the ticks during feeding (PubMed:33306955). Acts as a cell wall hydrolase that cleaves the bond between gamma-D-glutamate-meso-diaminopimelate of a peptide stem and D-alanine of another peptide stem in peptidoglycans (PubMed:25470067). In vitro, degrades peptidoglycans from both Gram-negative and Gram-positive bacteria (PubMed:33306955). Is not able to traverse the protective outer membrane of Gram-negative bacteria (PubMed:25470067). Is not able to kill Borrelia burgdorferi, one of the Lyme disease-causing bacteria (PubMed:33306955).</text>
</comment>
<comment type="subcellular location">
    <subcellularLocation>
        <location evidence="4">Secreted</location>
    </subcellularLocation>
    <text evidence="4">Secreted into the outgoing saliva and delivered to host bite site via saliva during feeding (PubMed:33306955). Also secreted in host blood via saliva, since host sera is immunoreactive to this protein (PubMed:33306955).</text>
</comment>
<comment type="tissue specificity">
    <text evidence="2 4">Detected in salivary glands and in the gut (at protein level).</text>
</comment>
<comment type="developmental stage">
    <text evidence="2 4">Expressed in both unfed adult and nymph life stages, with a higher expression in adult stage.</text>
</comment>
<comment type="induction">
    <text evidence="3 4">By feeding (in both nymph and adult stages) (PubMed:33306955). Is responsive to IFN-gamma acquired in the blood meal from mice infected with the bacteria B.burgdorferi, leading to induction of antimicrobial responses (PubMed:27374407).</text>
</comment>
<comment type="PTM">
    <text evidence="4">May be post-translationally modified, since the saliva wild-type protein is slightly heavier than the recombinant one.</text>
</comment>
<comment type="disruption phenotype">
    <text evidence="2 4">Feeding interruption, and proliferation of bacteria in ticks.</text>
</comment>
<comment type="miscellaneous">
    <text evidence="2">Acquired via bacteria-to-eukarya horizontal gene transfer events. Bacterial type VI secretion amidase effector 2 genes (tae2, AC P0DW66) have been transferred to eukaryotes on at least six occasions.</text>
</comment>
<comment type="similarity">
    <text evidence="7">Belongs to the cell wall amidase Dae2/Tae2-like family.</text>
</comment>
<comment type="sequence caution" evidence="7">
    <conflict type="erroneous gene model prediction">
        <sequence resource="EMBL-CDS" id="EEC07552"/>
    </conflict>
    <text>The sequence corresponds to that shown in Fig.S1 of Hayes et al., 2020.</text>
</comment>
<protein>
    <recommendedName>
        <fullName evidence="6">Domesticated amidase effector 2</fullName>
        <shortName evidence="5 6">Dae2</shortName>
        <ecNumber>3.4.-.-</ecNumber>
    </recommendedName>
    <alternativeName>
        <fullName evidence="7">Peptidoglycan endopeptidase Dae2</fullName>
    </alternativeName>
</protein>
<dbReference type="EC" id="3.4.-.-"/>
<dbReference type="EMBL" id="ABJB010223783">
    <property type="status" value="NOT_ANNOTATED_CDS"/>
    <property type="molecule type" value="Genomic_DNA"/>
</dbReference>
<dbReference type="EMBL" id="DS742756">
    <property type="protein sequence ID" value="EEC07552.1"/>
    <property type="status" value="ALT_SEQ"/>
    <property type="molecule type" value="Genomic_DNA"/>
</dbReference>
<dbReference type="RefSeq" id="XP_002434728.1">
    <property type="nucleotide sequence ID" value="XM_002434683.1"/>
</dbReference>
<dbReference type="SMR" id="B7PLT0"/>
<dbReference type="PaxDb" id="6945-B7PLT0"/>
<dbReference type="EnsemblMetazoa" id="ISCI006596-RA">
    <property type="protein sequence ID" value="ISCI006596-PA"/>
    <property type="gene ID" value="ISCI006596"/>
</dbReference>
<dbReference type="VEuPathDB" id="VectorBase:ISCI006596"/>
<dbReference type="VEuPathDB" id="VectorBase:ISCP_029711"/>
<dbReference type="VEuPathDB" id="VectorBase:ISCW006596"/>
<dbReference type="HOGENOM" id="CLU_1688679_0_0_1"/>
<dbReference type="InParanoid" id="B7PLT0"/>
<dbReference type="OrthoDB" id="6478758at2759"/>
<dbReference type="Proteomes" id="UP000001555">
    <property type="component" value="Unassembled WGS sequence"/>
</dbReference>
<dbReference type="GO" id="GO:0005576">
    <property type="term" value="C:extracellular region"/>
    <property type="evidence" value="ECO:0007669"/>
    <property type="project" value="UniProtKB-SubCell"/>
</dbReference>
<dbReference type="GO" id="GO:0016787">
    <property type="term" value="F:hydrolase activity"/>
    <property type="evidence" value="ECO:0007669"/>
    <property type="project" value="UniProtKB-KW"/>
</dbReference>
<dbReference type="GO" id="GO:0042742">
    <property type="term" value="P:defense response to bacterium"/>
    <property type="evidence" value="ECO:0007669"/>
    <property type="project" value="UniProtKB-KW"/>
</dbReference>
<dbReference type="GO" id="GO:0045087">
    <property type="term" value="P:innate immune response"/>
    <property type="evidence" value="ECO:0007669"/>
    <property type="project" value="UniProtKB-KW"/>
</dbReference>
<dbReference type="InterPro" id="IPR047746">
    <property type="entry name" value="Dae2/Tae2-like"/>
</dbReference>
<dbReference type="NCBIfam" id="NF033857">
    <property type="entry name" value="BPSL0067_fam"/>
    <property type="match status" value="1"/>
</dbReference>